<feature type="signal peptide" evidence="3 4">
    <location>
        <begin position="1"/>
        <end position="21"/>
    </location>
</feature>
<feature type="chain" id="PRO_0000021255" description="Fibroin heavy chain">
    <location>
        <begin position="22"/>
        <end position="5263"/>
    </location>
</feature>
<feature type="region of interest" description="Highly repetitive">
    <location>
        <begin position="149"/>
        <end position="5206"/>
    </location>
</feature>
<feature type="disulfide bond" description="Interchain (with C-190 in light chain)" evidence="1">
    <location>
        <position position="5244"/>
    </location>
</feature>
<feature type="disulfide bond" evidence="1">
    <location>
        <begin position="5260"/>
        <end position="5263"/>
    </location>
</feature>
<feature type="sequence conflict" description="In Ref. 2." evidence="5" ref="2">
    <original>C</original>
    <variation>V</variation>
    <location>
        <position position="10"/>
    </location>
</feature>
<feature type="strand" evidence="6">
    <location>
        <begin position="31"/>
        <end position="39"/>
    </location>
</feature>
<feature type="strand" evidence="6">
    <location>
        <begin position="42"/>
        <end position="48"/>
    </location>
</feature>
<feature type="strand" evidence="6">
    <location>
        <begin position="54"/>
        <end position="65"/>
    </location>
</feature>
<feature type="strand" evidence="6">
    <location>
        <begin position="79"/>
        <end position="92"/>
    </location>
</feature>
<feature type="strand" evidence="6">
    <location>
        <begin position="97"/>
        <end position="107"/>
    </location>
</feature>
<keyword id="KW-0002">3D-structure</keyword>
<keyword id="KW-0903">Direct protein sequencing</keyword>
<keyword id="KW-1015">Disulfide bond</keyword>
<keyword id="KW-1185">Reference proteome</keyword>
<keyword id="KW-0677">Repeat</keyword>
<keyword id="KW-0732">Signal</keyword>
<keyword id="KW-0737">Silk protein</keyword>
<gene>
    <name type="primary">FIBH</name>
</gene>
<dbReference type="EMBL" id="AF226688">
    <property type="protein sequence ID" value="AAF76983.1"/>
    <property type="molecule type" value="Genomic_DNA"/>
</dbReference>
<dbReference type="EMBL" id="V00094">
    <property type="protein sequence ID" value="CAA23432.1"/>
    <property type="molecule type" value="Genomic_DNA"/>
</dbReference>
<dbReference type="EMBL" id="V00097">
    <property type="protein sequence ID" value="CAA23433.1"/>
    <property type="molecule type" value="Genomic_DNA"/>
</dbReference>
<dbReference type="EMBL" id="S74439">
    <property type="protein sequence ID" value="AAB31861.1"/>
    <property type="molecule type" value="mRNA"/>
</dbReference>
<dbReference type="EMBL" id="X13869">
    <property type="protein sequence ID" value="CAA32076.1"/>
    <property type="molecule type" value="mRNA"/>
</dbReference>
<dbReference type="EMBL" id="M35378">
    <property type="protein sequence ID" value="AAA27839.1"/>
    <property type="molecule type" value="mRNA"/>
</dbReference>
<dbReference type="EMBL" id="AB017362">
    <property type="protein sequence ID" value="BAA33147.1"/>
    <property type="molecule type" value="Genomic_DNA"/>
</dbReference>
<dbReference type="EMBL" id="CK538369">
    <property type="status" value="NOT_ANNOTATED_CDS"/>
    <property type="molecule type" value="mRNA"/>
</dbReference>
<dbReference type="EMBL" id="AADK01000575">
    <property type="status" value="NOT_ANNOTATED_CDS"/>
    <property type="molecule type" value="Genomic_DNA"/>
</dbReference>
<dbReference type="PIR" id="S01844">
    <property type="entry name" value="S01844"/>
</dbReference>
<dbReference type="RefSeq" id="NP_001106733.1">
    <property type="nucleotide sequence ID" value="NM_001113262.1"/>
</dbReference>
<dbReference type="PDB" id="3UA0">
    <property type="method" value="X-ray"/>
    <property type="resolution" value="3.00 A"/>
    <property type="chains" value="A/B=1-126"/>
</dbReference>
<dbReference type="PDBsum" id="3UA0"/>
<dbReference type="SMR" id="P05790"/>
<dbReference type="STRING" id="7091.P05790"/>
<dbReference type="PaxDb" id="7091-BGIBMGA005111-TA"/>
<dbReference type="EnsemblMetazoa" id="NM_001113262.1">
    <property type="protein sequence ID" value="NP_001106733.1"/>
    <property type="gene ID" value="GeneID_693030"/>
</dbReference>
<dbReference type="GeneID" id="693030"/>
<dbReference type="KEGG" id="bmor:693030"/>
<dbReference type="CTD" id="693030"/>
<dbReference type="InParanoid" id="P05790"/>
<dbReference type="OrthoDB" id="660576at7088"/>
<dbReference type="EvolutionaryTrace" id="P05790"/>
<dbReference type="Proteomes" id="UP000005204">
    <property type="component" value="Unassembled WGS sequence"/>
</dbReference>
<dbReference type="Gene3D" id="6.20.280.10">
    <property type="match status" value="1"/>
</dbReference>
<dbReference type="InterPro" id="IPR052258">
    <property type="entry name" value="Diverse_Func_Domain-Protein"/>
</dbReference>
<dbReference type="InterPro" id="IPR049375">
    <property type="entry name" value="Fib-H_N"/>
</dbReference>
<dbReference type="InterPro" id="IPR049376">
    <property type="entry name" value="Fib-H_N_sf"/>
</dbReference>
<dbReference type="PANTHER" id="PTHR37612">
    <property type="entry name" value="FIBROIN HEAVY CHAIN FIB-H LIKE PROTEIN"/>
    <property type="match status" value="1"/>
</dbReference>
<dbReference type="PANTHER" id="PTHR37612:SF19">
    <property type="entry name" value="FIBROIN HEAVY CHAIN FIB-H LIKE PROTEIN"/>
    <property type="match status" value="1"/>
</dbReference>
<dbReference type="Pfam" id="PF20820">
    <property type="entry name" value="Fib-H_N"/>
    <property type="match status" value="1"/>
</dbReference>
<comment type="function">
    <text>Core component of the silk filament; a strong, insoluble and chemically inert fiber.</text>
</comment>
<comment type="subunit">
    <text evidence="1 2">Silk fibroin elementary unit consists in a disulfide-linked heavy and light chain and a p25 glycoprotein in molar ratios of 6:6:1. This results in a complex of approximately 2.3 MDa.</text>
</comment>
<comment type="tissue specificity">
    <text>Produced exclusively in the posterior (PSG) section of silk glands, which are essentially modified salivary glands.</text>
</comment>
<comment type="domain">
    <text>Composed of antiparallel beta sheets. The strands of the beta sheets run parallel to the fiber axis. Long stretches of silk fibroin are composed of microcrystalline arrays of (-Gly-Ser-Gly-Ala-Gly-Ala-)n interrupted by regions containing bulkier residues. The fiber is composed of microcrystalline arrays alternating with amorphous regions.</text>
</comment>
<comment type="PTM">
    <text>The interchain disulfide bridge is essential for the intracellular transport and secretion of fibroin.</text>
</comment>
<organism>
    <name type="scientific">Bombyx mori</name>
    <name type="common">Silk moth</name>
    <dbReference type="NCBI Taxonomy" id="7091"/>
    <lineage>
        <taxon>Eukaryota</taxon>
        <taxon>Metazoa</taxon>
        <taxon>Ecdysozoa</taxon>
        <taxon>Arthropoda</taxon>
        <taxon>Hexapoda</taxon>
        <taxon>Insecta</taxon>
        <taxon>Pterygota</taxon>
        <taxon>Neoptera</taxon>
        <taxon>Endopterygota</taxon>
        <taxon>Lepidoptera</taxon>
        <taxon>Glossata</taxon>
        <taxon>Ditrysia</taxon>
        <taxon>Bombycoidea</taxon>
        <taxon>Bombycidae</taxon>
        <taxon>Bombycinae</taxon>
        <taxon>Bombyx</taxon>
    </lineage>
</organism>
<evidence type="ECO:0000269" key="1">
    <source>
    </source>
</evidence>
<evidence type="ECO:0000269" key="2">
    <source>
    </source>
</evidence>
<evidence type="ECO:0000269" key="3">
    <source>
    </source>
</evidence>
<evidence type="ECO:0000269" key="4">
    <source ref="7"/>
</evidence>
<evidence type="ECO:0000305" key="5"/>
<evidence type="ECO:0007829" key="6">
    <source>
        <dbReference type="PDB" id="3UA0"/>
    </source>
</evidence>
<sequence length="5263" mass="391593">MRVKTFVILCCALQYVAYTNANINDFDEDYFGSDVTVQSSNTTDEIIRDASGAVIEEQITTKKMQRKNKNHGILGKNEKMIKTFVITTDSDGNESIVEEDVLMKTLSDGTVAQSYVAADAGAYSQSGPYVSNSGYSTHQGYTSDFSTSAAVGAGAGAGAAAGSGAGAGAGYGAASGAGAGAGAGAGAGYGTGAGAGAGAGYGAGAGAGAGAGYGAGAGAGAGAGYGAGAGAGAGAGYGAGAGAGAGAGYGAGAGAGAGAGYGAASGAGAGAGYGQGVGSGAASGAGAGAGAGSAAGSGAGAGAGTGAGAGYGAGAGAGAGAGYGAASGTGAGYGAGAGAGYGGASGAGAGAGAGAGAGAGAGYGTGAGYGAGAGAGAGAGAGAGYGAGAGAGYGAGYGVGAGAGYGAGYGAGAGSGAASGAGSGAGAGSGAGAGSGAGAGSGAGAGSGAGAGSGAGAGSGAGAGSGAGAGSGTGAGSGAGAGYGAGAGAGYGAGAGSGAASGAGAGSGAGAGSGAGAGSGAGAGSGAGAGSGAGAGYGAGAGAGYGAGAGAGYGAGAGVGYGAGAGSGAASGAGAGSGAGAGSGAGAGSGAGAGSGAGAGSGAGAGSGAGAGSGAGAGSGAGAGSGAGVGYGAGVGAGYGAGYGAGAGAGYGAGAGSGAASGAGAGAGAGAGTGSSGFGPYVANGGYSRSDGYEYAWSSDFGTGSGAGAGSGAGAGSGAGAGSGAGAGSGAGAGSGAGAGYGAGVGVGYGAGYGAGAGAGYGAGAGSGAASGAGAGSGAGAGSGAGAGSGAGAGSGAGAGSGAGAGSGAGAGSGAGAGSGAGAGSGAGAGSGAGVGSGAGAGSGAGAGVGYGAGAGVGYGAGAGSGAASGAGAGSGAGAGSGAGAGSGAGAGSGAGAGSGAGAGSGAGAGSGAGAGSGAGAGSGAGVGYGAGVGAGYGAGYGAGAGAGYGAGAGSGAASGAGAGSGAGAGSGAGAGSGAGAGSGAGAGSGAGAGSGAGAGSGAGAGSGAGAGSGAGAGSGAGAGSGAGAGYGAGAGAGYGAGYGAGAGAGYGAGAGSGAASGAGSGAGAGSGAGAGAGSGAGAGSGAGAGSGAGAGSGAGAGSGAGAGSGAGAGYGAGVGAGYGAGYGAGAGAGYGAGAGSGAASGAGAGSGAGAGSGAGAGSGAGAGSGAGAGSGAGAGSGAGAGSGAGVGYGAGYGAGAGAGYGAGAGSGAASGAGAGAGAGAGTGSSGFGPYVAHGGYSGYEYAWSSESDFGTGSGAGAGSGAGAGSGAGAGSGAGAGSGAGYGAGVGAGYGAGYGAGAGAGYGAGAGSGAGSGAGAGSGAGAGSGAGAGSGAGAGSGAGAGSGAGAGSGAGAGSGAGAGSGAGAGYGAGYGAGAGAGYGAGAGSGAGSGAGAGSGAGAGSGAGAGSGAGAGSGAGAGSGAGAGSGAGAGSGAGAGYGAGVGAGYGAGYGAGAGAGYGAGAGSGAGSGAGAGSGAGAGSGAGAGSGAGVGSGAGAGSGAGAGSGAGAGSGAGAGYGAGYGAGAGAGYGAGAGSGAGSGAGAGSGAGAGSGAGAGSGAGAGSGAGAGSGAGAGSGAGAGSGAGVGYGAGVGAGYGAGYGAGAGAGYGAGAGSGAASGAGAGAGAGAGTGSSGFGPYVANGGYSGYEYAWSSESDFGTGSGAGAGSGAGAGSGAGAGSGAGAGSGAGAGYGAGYGAGAGAGYGAGAGSGAGSGAGAGSGAGAGSGAGAGSGAGAGSGAGAGSGAGAGSGAGAGSGAGSGSGAGAGSGAGAGSGAGAGYGAGVGAGYGVGYGAGAGAGYGAGAGSGAASGAGAGAGAGAGTGSSGFGPYVAHGGYSGYEYAWSSESDFGTGSGAGAGSGAGAGSGAGAGSGAGAGSGAGAGSGAGAGSGAGAGYGAGVGAGYGAAYGAGAGAGYGAGAGSGAASGAGAGSGAGAGSGAGAGSGAGAGSGAGAGSGAGAGSGAGAGSGAGAGSGAGAGSGAGAGSGAGAGYGAGAGAGYGAGAGSGAGSGAGAGSGAGAGSGAGAGSGAGAGSGAGAGSGAGSGSGAGAGSGAGAGSGAGAGYGAGVGAGYGAGYGAGAGAGYGAGAGSGAGSGAGAGSGAGAGYGAGAGAGYGAGYGAGAGAGYGAGAGTGAGSGAGAGSGAGAGSGAGAGSGAGAGSGAGAGSGAGAGSGAGSGSGAGAGSGAGAGSGAGAGSGAGAGSGAGAGSGAGAGYGAGAGAGYGAGYGAGAGAGYGAGAGSGAGSGAGAGSGAGAGSGAGAGSGAGAGYGAGYGAGAGSGAASGAGAGAGAGAGTGSSGFGPYVAHGGYSGYEYAWSSESDFGTGSGAGAGSGAGAGAGAGAGSGAGAGYGAGVGAGYGAGYGAGAGAGYGAGAGSGTGSGAGAGSGAGAGYGAGVGAGYGAGAGSGAAFGAGAGAGAGSGAGAGSGAGAGSGAGAGSGAGAGSGAGAGYGAGYGAGVGAGYGAGAGSGAASGAGAGSGAGAGSGAGAGSGAGAGSGAGAGSGAGAGYGAGVGAGYGAGYGAGAGAGYGAGAGSGAASGAGAGSGAGAGAGSGAGAGSGAGAGSGAGAGSGAGSGAGAGSGAGAGSGAGAGYGAGAGSGAASGAGAGAGAGAGTGSSGFGPYVANGGYSGYEYAWSSESDFGTGSGAGAGSGAGAGSGAGAGSGAGAGSGAGAGYGAGVGAGYGAGYGAGAGAGYGAGAGSGAGSGAGAGSGAGAGSGAGAGSGAGAGSGAGAGSGAGAGSGAGAGYGAGAGSGAASGAGAGSGAGAGSGAGAGSGAGAGSGAGAGSGAGAGSGAGAGYGAGVGAGYGVGYGAGAGAGYGAGAGSGAGSGAGAGSGAGAGSGAGAGSGAGAGSGAGSGAGAGSGAGAGSGAGAGSGAGSGAGAGSGAGAGYGVGYGAGAGAGYGAGAGSGAGSGAGAGSGAGAGSGAGAGSGAGSGAGAGSGAGAGSGAGAGSGAGAGYGAGVGAGYGVGYGAGAGAGYGAGAGSGAGSGAGAGSGAGAGSGAGAGSGAGAGSGAGAGSGAGAGSGAGAGSGAGSGAGAGSGAGAGSGAGAGSGAGAGSGAGSGAGAGSGAGAGSGAGAGSGAGAGYGAGVGAGYGVGYGAGVGAGYGAGAGSGAASGAGAGSGAGAGAGSGAGAGSGAGAGSGAGAGSGAGAGSGAGAGSGAGAGYGAGYGAGVGAGYGAGAGVGYGAGAGAGYGAGAGSGAASGAGAGAGSGAGAGTGAGAGSGAGAGYGAGAGSGAASGAGAGAGAGAGTGSSGFGPYVANGGYSGYEYAWSSESDFGTGSGAGAGSGAGAGSGAGAGSGAGAGSGAGAGYGAGVGAGYGAGAGSGAGSGAGAGSGAGAGSGAGAGSGAGAGSGAGAGYGAGAGSGTGSGAGAGSGAGAGSGAGAGSGAGAGSGAGAGSGAGAGSGVGAGYGVGYGAGAGAGYGVGYGAGAGAGYGAGAGSGTGSGAGAGSGAGAGSGAGAGSGAGAGSGAGAGSGAGAGSGAGAGYGAGVGAGYGVGYGAGAGAGYGAGAGSGAGSGAGAGSGAGAGSGAGAGSGAGAGSGAGSGAGAGSGAGAGSGAGAGSGAGSGAGAGSGAGAGYGVGYGAGAGAGYGAGAGSGAGSGAGAGSGAGAGSGAGAGSGAGSGAGAGSGAGAGSGAGAGSGAGAGYGAGVGAGYGVGYGAGAGAGYGAGAGSGAGSGAGAGSGAGAGSGAGAGSGAGAGSGAGAGSGAGAGSGAGAGSGAGSGAGAGSGAGAGSGAGAGSGAGAGYGAGVGAGYGVGYGAGAGAGYGAGAGSGAASGAGAGAGAGAGTGSSGFGPYVANGGYSGYEYAWSSESDFGTGSGAGAGSGAGAGSGAGAGYGAGYGAGVGAGYGAGAGVGYGAGAGAGYGAGAGSGAASGAGAGAGAGAGSGAGAGSGAGAGAGSGAGAGYGAGYGIGVGAGYGAGAGVGYGAGAGAGYGAGAGSGAASGAGAGSGAGAGSGAGAGSGAGAGSGAGAGSGAGAGSGAGAGYGAGYGAGVGAGYGAGAGVGYGAGAGAGYGAGAGSGAASGAGAGAGAGAGAGSGAGAGSGAGAGSGAGAGSGAGAGSGAGAGSGAGAGSGAGAGSGAGAGSGAGAGYGAGVGAGYGAGYGGAGAGYGAGAGSGAASGAGAGSGAGAGSGAGAGSGAGAGSGAGAGSGAGAGYGAGAGSGAASGAGAGAGAGAGTGSSGFGPYVNGGYSGYEYAWSSESDFGTGSGAGAGSGAGAGSGAGAGYGAGVGAGYGAGYGAGAGAGYGAGAGSGAASGAGAGSGAGAGSGAGAGSGAGAGSGAGSGAGAGSGAGAGSGAGAGSGAGAGSGAGAGSGAGAGYGAGVGAGYGAGYGAGAGAGYGAGAGSGAASGAGAGSGAGAGAGSGAGAGSGAGAGSGAGAGSGAGAGSGAGAGSGAGSGAGAGSGAGAGYGAGYGAGVGAGYGAGAGVGYGAGAGAGYGAGAGSGAASGAGAGSGSGAGSGAGAGSGAGAGSGAGAGAGSGAGAGSGAGAGSGAGAGYGAGYGAGAGSGAASGAGAGAGAGAGTGSSGFGPYVANGGYSGYEYAWSSESDFGTGSGAGAGSGAGAGSGAGAGYGAGVGAGYGAGYGAGAGAGYGAGAGSGAGSGAGAGSGAGAGSGAGAGSGAGAGSGAGAGSGAGAGSGAGAGSGAGAGYGAGYGAGAGAGYGAGAGVGYGAGAGAGYGAGAGSGAGSGAGAGSGSGAGAGSGSGAGSGAGAGSGAGAGSGAGAGSGAGAGSGAGAGSGAGAGSGAGAGYGAGYGIGVGAGYGAGAGVGYGAGAGAGYGAGAGSGAASGAGAGSGAGAGSGAGAGSGAGAGSGAGAGSGAGAGSGAGAGSGAGAGSGAGAGSGAGAGYGAGAGVGYGAGAGSGAASGAGAGSGAGAGSGAGAGSGAGAGSGAGAGSGAGAGSGAGAGSGAGSGAGAGSGAGAGYGAGYGAGVGAGYGAGAGYGAGYGVGAGAGYGAGAGSGAGSGAGAGSGAGAGSGAGAGSGAGAGSGAGAGSGAGSGAGAGYGAGAGAGYGAGAGAGYGAGAGSGAASGAGAGAGAGSGAGAGSGAGAGSGAGSGAGAGSGAGAGYGAGAGSGAASGAGAGSGAGAGAGAGAGAGSGAGAGSGAGAGYGAGAGSGAASGAGAGAGAGTGSSGFGPYVANGGYSRREGYEYAWSSKSDFETGSGAASGAGAGAGSGAGAGSGAGAGSGAGAGSGAGAGGSVSYGAGRGYGQGAGSAASSVSSASSRSYDYSRRNVRKNCGIPRRQLVVKFRALPCVNC</sequence>
<name>FIBH_BOMMO</name>
<accession>P05790</accession>
<accession>Q17220</accession>
<accession>Q26379</accession>
<reference key="1">
    <citation type="journal article" date="2000" name="Nucleic Acids Res.">
        <title>Fine organization of Bombyx mori fibroin heavy chain gene.</title>
        <authorList>
            <person name="Zhou C.-Z."/>
            <person name="Confalonieri F."/>
            <person name="Medina N."/>
            <person name="Zivanovic Y."/>
            <person name="Esnault C."/>
            <person name="Yang T."/>
            <person name="Jacquet M."/>
            <person name="Janin J."/>
            <person name="Duguet M."/>
            <person name="Perasso R."/>
            <person name="Li Z.-G."/>
        </authorList>
    </citation>
    <scope>NUCLEOTIDE SEQUENCE [GENOMIC DNA]</scope>
</reference>
<reference key="2">
    <citation type="journal article" date="1979" name="Cell">
        <title>The DNA sequence of Bombyx mori fibroin gene including the 5' flanking, mRNA coding, entire intervening and fibroin protein coding regions.</title>
        <authorList>
            <person name="Tsujimoto Y."/>
            <person name="Suzuki Y."/>
        </authorList>
    </citation>
    <scope>NUCLEOTIDE SEQUENCE [GENOMIC DNA] OF 1-168</scope>
</reference>
<reference key="3">
    <citation type="journal article" date="2006" name="Biochem. Biophys. Res. Commun.">
        <title>In vivo analysis of fibroin heavy chain signal peptide of silkworm Bombyx mori using recombinant baculovirus as vector.</title>
        <authorList>
            <person name="Wang S.P."/>
            <person name="Guo T.Q."/>
            <person name="Guo X.Y."/>
            <person name="Huang J.T."/>
            <person name="Lu C.D."/>
        </authorList>
    </citation>
    <scope>PROTEIN SEQUENCE OF 22-31</scope>
</reference>
<reference key="4">
    <citation type="journal article" date="1979" name="Cell">
        <title>Structural analysis of the fibroin gene at the 5' end and its surrounding regions.</title>
        <authorList>
            <person name="Tsujimoto Y."/>
            <person name="Suzuki Y."/>
        </authorList>
    </citation>
    <scope>PARTIAL NUCLEOTIDE SEQUENCE [GENOMIC DNA]</scope>
</reference>
<reference key="5">
    <citation type="journal article" date="1988" name="J. Mol. Biol.">
        <title>Specific codon usage pattern and its implications on the secondary structure of silk fibroin mRNA.</title>
        <authorList>
            <person name="Mita K."/>
            <person name="Ichimura S."/>
            <person name="Zama M."/>
            <person name="James T.C."/>
        </authorList>
    </citation>
    <scope>PARTIAL NUCLEOTIDE SEQUENCE [MRNA]</scope>
    <source>
        <strain>Kinshu X Showa</strain>
    </source>
</reference>
<reference key="6">
    <citation type="journal article" date="1994" name="J. Mol. Evol.">
        <title>Highly repetitive structure and its organization of the silk fibroin gene.</title>
        <authorList>
            <person name="Mita K."/>
            <person name="Ichimura S."/>
            <person name="James T.C."/>
        </authorList>
    </citation>
    <scope>PARTIAL NUCLEOTIDE SEQUENCE [MRNA]</scope>
</reference>
<reference key="7">
    <citation type="submission" date="2009-08" db="UniProtKB">
        <authorList>
            <person name="Lubec G."/>
            <person name="Chen W.-Q."/>
        </authorList>
    </citation>
    <scope>PROTEIN SEQUENCE OF 22-38; 46-63; 81-171; 191-213; 274-311; 377-409; 414-438; 542-561; 632-691; 695-726; 930-951; 1032-1051; 1116-1137; 1198-1308; 1364-1382; 1441-1462; 1512-1530; 1589-1682; 1685-1703; 1741-1873; 1903-1914; 2024-2084; 2105-2124; 2213-2232; 2271-2369; 2506-2527; 2532-2547; 2553-2580; 2590-2663; 2673-2694; 2797-2816; 2836-2900; 2914-2941; 2957-2976; 3014-3069; 3111-3126; 3165-3192; 3229-3302; 3400-3427; 3488-3507; 3527-3591; 3605-3632; 3648-3667; 3705-3732; 3748-3866; 3909-3936; 3989-4016; 4026-4055; 4095-4106; 4160-4189; 4197-4251; 4269-4296; 4324-4345; 4350-4365; 4383-4410; 4414-4441; 4506-4598; 4648-4682; 4755-4782; 4898-4925; 4947-4958; 5033-5069; 5079-5094; 5115-5148; 5151-5233 AND 5256-5263</scope>
    <scope>IDENTIFICATION BY MASS SPECTROMETRY</scope>
</reference>
<reference key="8">
    <citation type="journal article" date="1999" name="Biochim. Biophys. Acta">
        <title>Determination of the site of disulfide linkage between heavy and light chains of silk fibroin produced by Bombyx mori.</title>
        <authorList>
            <person name="Tanaka K."/>
            <person name="Kajiyama N."/>
            <person name="Ishikura K."/>
            <person name="Waga S."/>
            <person name="Kikuchi A."/>
            <person name="Ohtomo K."/>
            <person name="Takagi T."/>
            <person name="Mizuno S."/>
        </authorList>
    </citation>
    <scope>NUCLEOTIDE SEQUENCE [GENOMIC DNA] OF 5179-5263</scope>
    <scope>DISULFIDE BONDS</scope>
    <source>
        <strain>J-139</strain>
    </source>
</reference>
<reference key="9">
    <citation type="journal article" date="2004" name="Science">
        <title>A draft sequence for the genome of the domesticated silkworm (Bombyx mori).</title>
        <authorList>
            <person name="Xia Q."/>
            <person name="Zhou Z."/>
            <person name="Lu C."/>
            <person name="Cheng D."/>
            <person name="Dai F."/>
            <person name="Li B."/>
            <person name="Zhao P."/>
            <person name="Zha X."/>
            <person name="Cheng T."/>
            <person name="Chai C."/>
            <person name="Pan G."/>
            <person name="Xu J."/>
            <person name="Liu C."/>
            <person name="Lin Y."/>
            <person name="Qian J."/>
            <person name="Hou Y."/>
            <person name="Wu Z."/>
            <person name="Li G."/>
            <person name="Pan M."/>
            <person name="Li C."/>
            <person name="Shen Y."/>
            <person name="Lan X."/>
            <person name="Yuan L."/>
            <person name="Li T."/>
            <person name="Xu H."/>
            <person name="Yang G."/>
            <person name="Wan Y."/>
            <person name="Zhu Y."/>
            <person name="Yu M."/>
            <person name="Shen W."/>
            <person name="Wu D."/>
            <person name="Xiang Z."/>
            <person name="Yu J."/>
            <person name="Wang J."/>
            <person name="Li R."/>
            <person name="Shi J."/>
            <person name="Li H."/>
            <person name="Li G."/>
            <person name="Su J."/>
            <person name="Wang X."/>
            <person name="Li G."/>
            <person name="Zhang Z."/>
            <person name="Wu Q."/>
            <person name="Li J."/>
            <person name="Zhang Q."/>
            <person name="Wei N."/>
            <person name="Xu J."/>
            <person name="Sun H."/>
            <person name="Dong L."/>
            <person name="Liu D."/>
            <person name="Zhao S."/>
            <person name="Zhao X."/>
            <person name="Meng Q."/>
            <person name="Lan F."/>
            <person name="Huang X."/>
            <person name="Li Y."/>
            <person name="Fang L."/>
            <person name="Li C."/>
            <person name="Li D."/>
            <person name="Sun Y."/>
            <person name="Zhang Z."/>
            <person name="Yang Z."/>
            <person name="Huang Y."/>
            <person name="Xi Y."/>
            <person name="Qi Q."/>
            <person name="He D."/>
            <person name="Huang H."/>
            <person name="Zhang X."/>
            <person name="Wang Z."/>
            <person name="Li W."/>
            <person name="Cao Y."/>
            <person name="Yu Y."/>
            <person name="Yu H."/>
            <person name="Li J."/>
            <person name="Ye J."/>
            <person name="Chen H."/>
            <person name="Zhou Y."/>
            <person name="Liu B."/>
            <person name="Wang J."/>
            <person name="Ye J."/>
            <person name="Ji H."/>
            <person name="Li S."/>
            <person name="Ni P."/>
            <person name="Zhang J."/>
            <person name="Zhang Y."/>
            <person name="Zheng H."/>
            <person name="Mao B."/>
            <person name="Wang W."/>
            <person name="Ye C."/>
            <person name="Li S."/>
            <person name="Wang J."/>
            <person name="Wong G.K.-S."/>
            <person name="Yang H."/>
        </authorList>
    </citation>
    <scope>PARTIAL NUCLEOTIDE SEQUENCE [LARGE SCALE GENOMIC DNA]</scope>
    <source>
        <strain>p50T</strain>
    </source>
</reference>
<reference key="10">
    <citation type="journal article" date="2000" name="J. Biol. Chem.">
        <title>Silk fibroin of Bombyx mori is secreted, assembling a high molecular mass elementary unit consisting of H-chain, L-chain, and p25, with a 6:6:1 molar ratio.</title>
        <authorList>
            <person name="Inoue S."/>
            <person name="Tanaka K."/>
            <person name="Arisaka F."/>
            <person name="Kimura S."/>
            <person name="Ohtomo K."/>
            <person name="Mizuno S."/>
        </authorList>
    </citation>
    <scope>SUBUNIT</scope>
</reference>
<proteinExistence type="evidence at protein level"/>
<protein>
    <recommendedName>
        <fullName>Fibroin heavy chain</fullName>
        <shortName>Fib-H</shortName>
    </recommendedName>
    <alternativeName>
        <fullName>H-fibroin</fullName>
    </alternativeName>
</protein>